<protein>
    <recommendedName>
        <fullName>Long chain base biosynthesis protein 2c</fullName>
        <ecNumber>2.3.1.50</ecNumber>
    </recommendedName>
</protein>
<gene>
    <name type="ordered locus">Os01g0928700</name>
    <name type="ordered locus">LOC_Os01g70370</name>
    <name type="ORF">OsJ_04634</name>
    <name type="ORF">OSJNBa0052O12.13</name>
</gene>
<accession>Q8RYL0</accession>
<accession>A0A0P0VCB1</accession>
<reference key="1">
    <citation type="journal article" date="2002" name="Nature">
        <title>The genome sequence and structure of rice chromosome 1.</title>
        <authorList>
            <person name="Sasaki T."/>
            <person name="Matsumoto T."/>
            <person name="Yamamoto K."/>
            <person name="Sakata K."/>
            <person name="Baba T."/>
            <person name="Katayose Y."/>
            <person name="Wu J."/>
            <person name="Niimura Y."/>
            <person name="Cheng Z."/>
            <person name="Nagamura Y."/>
            <person name="Antonio B.A."/>
            <person name="Kanamori H."/>
            <person name="Hosokawa S."/>
            <person name="Masukawa M."/>
            <person name="Arikawa K."/>
            <person name="Chiden Y."/>
            <person name="Hayashi M."/>
            <person name="Okamoto M."/>
            <person name="Ando T."/>
            <person name="Aoki H."/>
            <person name="Arita K."/>
            <person name="Hamada M."/>
            <person name="Harada C."/>
            <person name="Hijishita S."/>
            <person name="Honda M."/>
            <person name="Ichikawa Y."/>
            <person name="Idonuma A."/>
            <person name="Iijima M."/>
            <person name="Ikeda M."/>
            <person name="Ikeno M."/>
            <person name="Ito S."/>
            <person name="Ito T."/>
            <person name="Ito Y."/>
            <person name="Ito Y."/>
            <person name="Iwabuchi A."/>
            <person name="Kamiya K."/>
            <person name="Karasawa W."/>
            <person name="Katagiri S."/>
            <person name="Kikuta A."/>
            <person name="Kobayashi N."/>
            <person name="Kono I."/>
            <person name="Machita K."/>
            <person name="Maehara T."/>
            <person name="Mizuno H."/>
            <person name="Mizubayashi T."/>
            <person name="Mukai Y."/>
            <person name="Nagasaki H."/>
            <person name="Nakashima M."/>
            <person name="Nakama Y."/>
            <person name="Nakamichi Y."/>
            <person name="Nakamura M."/>
            <person name="Namiki N."/>
            <person name="Negishi M."/>
            <person name="Ohta I."/>
            <person name="Ono N."/>
            <person name="Saji S."/>
            <person name="Sakai K."/>
            <person name="Shibata M."/>
            <person name="Shimokawa T."/>
            <person name="Shomura A."/>
            <person name="Song J."/>
            <person name="Takazaki Y."/>
            <person name="Terasawa K."/>
            <person name="Tsuji K."/>
            <person name="Waki K."/>
            <person name="Yamagata H."/>
            <person name="Yamane H."/>
            <person name="Yoshiki S."/>
            <person name="Yoshihara R."/>
            <person name="Yukawa K."/>
            <person name="Zhong H."/>
            <person name="Iwama H."/>
            <person name="Endo T."/>
            <person name="Ito H."/>
            <person name="Hahn J.H."/>
            <person name="Kim H.-I."/>
            <person name="Eun M.-Y."/>
            <person name="Yano M."/>
            <person name="Jiang J."/>
            <person name="Gojobori T."/>
        </authorList>
    </citation>
    <scope>NUCLEOTIDE SEQUENCE [LARGE SCALE GENOMIC DNA]</scope>
    <source>
        <strain>cv. Nipponbare</strain>
    </source>
</reference>
<reference key="2">
    <citation type="journal article" date="2005" name="Nature">
        <title>The map-based sequence of the rice genome.</title>
        <authorList>
            <consortium name="International rice genome sequencing project (IRGSP)"/>
        </authorList>
    </citation>
    <scope>NUCLEOTIDE SEQUENCE [LARGE SCALE GENOMIC DNA]</scope>
    <source>
        <strain>cv. Nipponbare</strain>
    </source>
</reference>
<reference key="3">
    <citation type="journal article" date="2008" name="Nucleic Acids Res.">
        <title>The rice annotation project database (RAP-DB): 2008 update.</title>
        <authorList>
            <consortium name="The rice annotation project (RAP)"/>
        </authorList>
    </citation>
    <scope>GENOME REANNOTATION</scope>
    <source>
        <strain>cv. Nipponbare</strain>
    </source>
</reference>
<reference key="4">
    <citation type="journal article" date="2013" name="Rice">
        <title>Improvement of the Oryza sativa Nipponbare reference genome using next generation sequence and optical map data.</title>
        <authorList>
            <person name="Kawahara Y."/>
            <person name="de la Bastide M."/>
            <person name="Hamilton J.P."/>
            <person name="Kanamori H."/>
            <person name="McCombie W.R."/>
            <person name="Ouyang S."/>
            <person name="Schwartz D.C."/>
            <person name="Tanaka T."/>
            <person name="Wu J."/>
            <person name="Zhou S."/>
            <person name="Childs K.L."/>
            <person name="Davidson R.M."/>
            <person name="Lin H."/>
            <person name="Quesada-Ocampo L."/>
            <person name="Vaillancourt B."/>
            <person name="Sakai H."/>
            <person name="Lee S.S."/>
            <person name="Kim J."/>
            <person name="Numa H."/>
            <person name="Itoh T."/>
            <person name="Buell C.R."/>
            <person name="Matsumoto T."/>
        </authorList>
    </citation>
    <scope>GENOME REANNOTATION</scope>
    <source>
        <strain>cv. Nipponbare</strain>
    </source>
</reference>
<reference key="5">
    <citation type="journal article" date="2005" name="PLoS Biol.">
        <title>The genomes of Oryza sativa: a history of duplications.</title>
        <authorList>
            <person name="Yu J."/>
            <person name="Wang J."/>
            <person name="Lin W."/>
            <person name="Li S."/>
            <person name="Li H."/>
            <person name="Zhou J."/>
            <person name="Ni P."/>
            <person name="Dong W."/>
            <person name="Hu S."/>
            <person name="Zeng C."/>
            <person name="Zhang J."/>
            <person name="Zhang Y."/>
            <person name="Li R."/>
            <person name="Xu Z."/>
            <person name="Li S."/>
            <person name="Li X."/>
            <person name="Zheng H."/>
            <person name="Cong L."/>
            <person name="Lin L."/>
            <person name="Yin J."/>
            <person name="Geng J."/>
            <person name="Li G."/>
            <person name="Shi J."/>
            <person name="Liu J."/>
            <person name="Lv H."/>
            <person name="Li J."/>
            <person name="Wang J."/>
            <person name="Deng Y."/>
            <person name="Ran L."/>
            <person name="Shi X."/>
            <person name="Wang X."/>
            <person name="Wu Q."/>
            <person name="Li C."/>
            <person name="Ren X."/>
            <person name="Wang J."/>
            <person name="Wang X."/>
            <person name="Li D."/>
            <person name="Liu D."/>
            <person name="Zhang X."/>
            <person name="Ji Z."/>
            <person name="Zhao W."/>
            <person name="Sun Y."/>
            <person name="Zhang Z."/>
            <person name="Bao J."/>
            <person name="Han Y."/>
            <person name="Dong L."/>
            <person name="Ji J."/>
            <person name="Chen P."/>
            <person name="Wu S."/>
            <person name="Liu J."/>
            <person name="Xiao Y."/>
            <person name="Bu D."/>
            <person name="Tan J."/>
            <person name="Yang L."/>
            <person name="Ye C."/>
            <person name="Zhang J."/>
            <person name="Xu J."/>
            <person name="Zhou Y."/>
            <person name="Yu Y."/>
            <person name="Zhang B."/>
            <person name="Zhuang S."/>
            <person name="Wei H."/>
            <person name="Liu B."/>
            <person name="Lei M."/>
            <person name="Yu H."/>
            <person name="Li Y."/>
            <person name="Xu H."/>
            <person name="Wei S."/>
            <person name="He X."/>
            <person name="Fang L."/>
            <person name="Zhang Z."/>
            <person name="Zhang Y."/>
            <person name="Huang X."/>
            <person name="Su Z."/>
            <person name="Tong W."/>
            <person name="Li J."/>
            <person name="Tong Z."/>
            <person name="Li S."/>
            <person name="Ye J."/>
            <person name="Wang L."/>
            <person name="Fang L."/>
            <person name="Lei T."/>
            <person name="Chen C.-S."/>
            <person name="Chen H.-C."/>
            <person name="Xu Z."/>
            <person name="Li H."/>
            <person name="Huang H."/>
            <person name="Zhang F."/>
            <person name="Xu H."/>
            <person name="Li N."/>
            <person name="Zhao C."/>
            <person name="Li S."/>
            <person name="Dong L."/>
            <person name="Huang Y."/>
            <person name="Li L."/>
            <person name="Xi Y."/>
            <person name="Qi Q."/>
            <person name="Li W."/>
            <person name="Zhang B."/>
            <person name="Hu W."/>
            <person name="Zhang Y."/>
            <person name="Tian X."/>
            <person name="Jiao Y."/>
            <person name="Liang X."/>
            <person name="Jin J."/>
            <person name="Gao L."/>
            <person name="Zheng W."/>
            <person name="Hao B."/>
            <person name="Liu S.-M."/>
            <person name="Wang W."/>
            <person name="Yuan L."/>
            <person name="Cao M."/>
            <person name="McDermott J."/>
            <person name="Samudrala R."/>
            <person name="Wang J."/>
            <person name="Wong G.K.-S."/>
            <person name="Yang H."/>
        </authorList>
    </citation>
    <scope>NUCLEOTIDE SEQUENCE [LARGE SCALE GENOMIC DNA]</scope>
    <source>
        <strain>cv. Nipponbare</strain>
    </source>
</reference>
<organism>
    <name type="scientific">Oryza sativa subsp. japonica</name>
    <name type="common">Rice</name>
    <dbReference type="NCBI Taxonomy" id="39947"/>
    <lineage>
        <taxon>Eukaryota</taxon>
        <taxon>Viridiplantae</taxon>
        <taxon>Streptophyta</taxon>
        <taxon>Embryophyta</taxon>
        <taxon>Tracheophyta</taxon>
        <taxon>Spermatophyta</taxon>
        <taxon>Magnoliopsida</taxon>
        <taxon>Liliopsida</taxon>
        <taxon>Poales</taxon>
        <taxon>Poaceae</taxon>
        <taxon>BOP clade</taxon>
        <taxon>Oryzoideae</taxon>
        <taxon>Oryzeae</taxon>
        <taxon>Oryzinae</taxon>
        <taxon>Oryza</taxon>
        <taxon>Oryza sativa</taxon>
    </lineage>
</organism>
<name>LCB2C_ORYSJ</name>
<feature type="chain" id="PRO_0000419152" description="Long chain base biosynthesis protein 2c">
    <location>
        <begin position="1"/>
        <end position="497"/>
    </location>
</feature>
<feature type="transmembrane region" description="Helical" evidence="2">
    <location>
        <begin position="4"/>
        <end position="24"/>
    </location>
</feature>
<feature type="modified residue" description="N6-(pyridoxal phosphate)lysine" evidence="1">
    <location>
        <position position="319"/>
    </location>
</feature>
<sequence length="497" mass="54647">MVRVPFVTAVTTVFSYGVIFGFGHLRDWFRALLRSLFSGHSPAAAGTNLKGYAPICGGQEDFYYRRFVRRVQDCFWRPIASKPDAWFDVVERYSNDSNKTLHRTTKTSRCLNLGSYNYLGFAAADEYCTPRVIESLKKYSASTCSVRVDGGNTKLHVELEELVARFVGKPAAILFGMGYVTNSAIIPALIGKGGLIISDSLNHNSIVNGARGSGASVQVFQHNNPAHLEEVLREQIAGGQPRTHRRWKKIIVIVEGIYSMEGELCKLPEIVAVCKKYKAYTYLDEAHSIGAVGKTGRGVCELLGVDPADVDIMMGTFTKSFGSCGGYIAASKEIIDHLKHICPAHIYATSMSPPAVQQVISAIEVILGEDGSDRGAKKLAQIRENSNFFRSELEKMGFEVLGDNDSPVMPIMLYNPAKMPAFSRECLRQKVAIVTVSFPATPLLLARARICISASHSREDLIKGLEVISKVGDLVGIKYLPVEHEKTTSAEKLKKIQ</sequence>
<evidence type="ECO:0000250" key="1"/>
<evidence type="ECO:0000255" key="2"/>
<evidence type="ECO:0000305" key="3"/>
<proteinExistence type="inferred from homology"/>
<keyword id="KW-0012">Acyltransferase</keyword>
<keyword id="KW-0256">Endoplasmic reticulum</keyword>
<keyword id="KW-0443">Lipid metabolism</keyword>
<keyword id="KW-0472">Membrane</keyword>
<keyword id="KW-0663">Pyridoxal phosphate</keyword>
<keyword id="KW-1185">Reference proteome</keyword>
<keyword id="KW-0746">Sphingolipid metabolism</keyword>
<keyword id="KW-0808">Transferase</keyword>
<keyword id="KW-0812">Transmembrane</keyword>
<keyword id="KW-1133">Transmembrane helix</keyword>
<dbReference type="EC" id="2.3.1.50"/>
<dbReference type="EMBL" id="AP004330">
    <property type="protein sequence ID" value="BAB90752.1"/>
    <property type="molecule type" value="Genomic_DNA"/>
</dbReference>
<dbReference type="EMBL" id="AP008207">
    <property type="protein sequence ID" value="BAF07192.1"/>
    <property type="molecule type" value="Genomic_DNA"/>
</dbReference>
<dbReference type="EMBL" id="AP014957">
    <property type="protein sequence ID" value="BAS76015.1"/>
    <property type="molecule type" value="Genomic_DNA"/>
</dbReference>
<dbReference type="EMBL" id="CM000138">
    <property type="protein sequence ID" value="EAZ14710.1"/>
    <property type="molecule type" value="Genomic_DNA"/>
</dbReference>
<dbReference type="RefSeq" id="XP_015613384.1">
    <property type="nucleotide sequence ID" value="XM_015757898.1"/>
</dbReference>
<dbReference type="SMR" id="Q8RYL0"/>
<dbReference type="FunCoup" id="Q8RYL0">
    <property type="interactions" value="1196"/>
</dbReference>
<dbReference type="STRING" id="39947.Q8RYL0"/>
<dbReference type="PaxDb" id="39947-Q8RYL0"/>
<dbReference type="EnsemblPlants" id="Os01t0928700-00">
    <property type="protein sequence ID" value="Os01t0928700-00"/>
    <property type="gene ID" value="Os01g0928700"/>
</dbReference>
<dbReference type="Gramene" id="Os01t0928700-00">
    <property type="protein sequence ID" value="Os01t0928700-00"/>
    <property type="gene ID" value="Os01g0928700"/>
</dbReference>
<dbReference type="KEGG" id="dosa:Os01g0928700"/>
<dbReference type="eggNOG" id="KOG1357">
    <property type="taxonomic scope" value="Eukaryota"/>
</dbReference>
<dbReference type="HOGENOM" id="CLU_015846_7_0_1"/>
<dbReference type="InParanoid" id="Q8RYL0"/>
<dbReference type="OMA" id="RMMSGHT"/>
<dbReference type="OrthoDB" id="65434at2759"/>
<dbReference type="PlantReactome" id="R-OSA-1119325">
    <property type="pathway name" value="Sphingolipid metabolism"/>
</dbReference>
<dbReference type="PlantReactome" id="R-OSA-1119610">
    <property type="pathway name" value="Biotin biosynthesis II"/>
</dbReference>
<dbReference type="UniPathway" id="UPA00222"/>
<dbReference type="Proteomes" id="UP000000763">
    <property type="component" value="Chromosome 1"/>
</dbReference>
<dbReference type="Proteomes" id="UP000007752">
    <property type="component" value="Chromosome 1"/>
</dbReference>
<dbReference type="Proteomes" id="UP000059680">
    <property type="component" value="Chromosome 1"/>
</dbReference>
<dbReference type="GO" id="GO:0005789">
    <property type="term" value="C:endoplasmic reticulum membrane"/>
    <property type="evidence" value="ECO:0007669"/>
    <property type="project" value="UniProtKB-SubCell"/>
</dbReference>
<dbReference type="GO" id="GO:0017059">
    <property type="term" value="C:serine palmitoyltransferase complex"/>
    <property type="evidence" value="ECO:0000318"/>
    <property type="project" value="GO_Central"/>
</dbReference>
<dbReference type="GO" id="GO:0030170">
    <property type="term" value="F:pyridoxal phosphate binding"/>
    <property type="evidence" value="ECO:0007669"/>
    <property type="project" value="InterPro"/>
</dbReference>
<dbReference type="GO" id="GO:0004758">
    <property type="term" value="F:serine C-palmitoyltransferase activity"/>
    <property type="evidence" value="ECO:0000318"/>
    <property type="project" value="GO_Central"/>
</dbReference>
<dbReference type="GO" id="GO:0046513">
    <property type="term" value="P:ceramide biosynthetic process"/>
    <property type="evidence" value="ECO:0000318"/>
    <property type="project" value="GO_Central"/>
</dbReference>
<dbReference type="GO" id="GO:0046512">
    <property type="term" value="P:sphingosine biosynthetic process"/>
    <property type="evidence" value="ECO:0000318"/>
    <property type="project" value="GO_Central"/>
</dbReference>
<dbReference type="CDD" id="cd06454">
    <property type="entry name" value="KBL_like"/>
    <property type="match status" value="1"/>
</dbReference>
<dbReference type="Gene3D" id="3.90.1150.10">
    <property type="entry name" value="Aspartate Aminotransferase, domain 1"/>
    <property type="match status" value="1"/>
</dbReference>
<dbReference type="Gene3D" id="3.40.640.10">
    <property type="entry name" value="Type I PLP-dependent aspartate aminotransferase-like (Major domain)"/>
    <property type="match status" value="1"/>
</dbReference>
<dbReference type="InterPro" id="IPR001917">
    <property type="entry name" value="Aminotrans_II_pyridoxalP_BS"/>
</dbReference>
<dbReference type="InterPro" id="IPR004839">
    <property type="entry name" value="Aminotransferase_I/II_large"/>
</dbReference>
<dbReference type="InterPro" id="IPR050087">
    <property type="entry name" value="AON_synthase_class-II"/>
</dbReference>
<dbReference type="InterPro" id="IPR015424">
    <property type="entry name" value="PyrdxlP-dep_Trfase"/>
</dbReference>
<dbReference type="InterPro" id="IPR015421">
    <property type="entry name" value="PyrdxlP-dep_Trfase_major"/>
</dbReference>
<dbReference type="InterPro" id="IPR015422">
    <property type="entry name" value="PyrdxlP-dep_Trfase_small"/>
</dbReference>
<dbReference type="PANTHER" id="PTHR13693">
    <property type="entry name" value="CLASS II AMINOTRANSFERASE/8-AMINO-7-OXONONANOATE SYNTHASE"/>
    <property type="match status" value="1"/>
</dbReference>
<dbReference type="PANTHER" id="PTHR13693:SF104">
    <property type="entry name" value="LONG CHAIN BASE BIOSYNTHESIS PROTEIN 2B"/>
    <property type="match status" value="1"/>
</dbReference>
<dbReference type="Pfam" id="PF00155">
    <property type="entry name" value="Aminotran_1_2"/>
    <property type="match status" value="1"/>
</dbReference>
<dbReference type="SUPFAM" id="SSF53383">
    <property type="entry name" value="PLP-dependent transferases"/>
    <property type="match status" value="1"/>
</dbReference>
<dbReference type="PROSITE" id="PS00599">
    <property type="entry name" value="AA_TRANSFER_CLASS_2"/>
    <property type="match status" value="1"/>
</dbReference>
<comment type="function">
    <text evidence="1">Serine palmitoyltransferase (SPT). The heterodimer formed with LCB1 constitutes the catalytic core (By similarity).</text>
</comment>
<comment type="catalytic activity">
    <reaction>
        <text>L-serine + hexadecanoyl-CoA + H(+) = 3-oxosphinganine + CO2 + CoA</text>
        <dbReference type="Rhea" id="RHEA:14761"/>
        <dbReference type="ChEBI" id="CHEBI:15378"/>
        <dbReference type="ChEBI" id="CHEBI:16526"/>
        <dbReference type="ChEBI" id="CHEBI:33384"/>
        <dbReference type="ChEBI" id="CHEBI:57287"/>
        <dbReference type="ChEBI" id="CHEBI:57379"/>
        <dbReference type="ChEBI" id="CHEBI:58299"/>
        <dbReference type="EC" id="2.3.1.50"/>
    </reaction>
</comment>
<comment type="cofactor">
    <cofactor evidence="1">
        <name>pyridoxal 5'-phosphate</name>
        <dbReference type="ChEBI" id="CHEBI:597326"/>
    </cofactor>
</comment>
<comment type="pathway">
    <text>Lipid metabolism; sphingolipid metabolism.</text>
</comment>
<comment type="subunit">
    <text evidence="1">Heterodimer with LCB1. Component of the serine palmitoyltransferase (SPT) complex, composed of LCB1 and LCB2 (By similarity).</text>
</comment>
<comment type="subcellular location">
    <subcellularLocation>
        <location evidence="1">Endoplasmic reticulum membrane</location>
        <topology evidence="1">Single-pass membrane protein</topology>
    </subcellularLocation>
</comment>
<comment type="similarity">
    <text evidence="3">Belongs to the class-II pyridoxal-phosphate-dependent aminotransferase family.</text>
</comment>